<reference key="1">
    <citation type="submission" date="2007-02" db="EMBL/GenBank/DDBJ databases">
        <title>Complete sequence of chromosome of Yersinia pestis Pestoides F.</title>
        <authorList>
            <consortium name="US DOE Joint Genome Institute"/>
            <person name="Copeland A."/>
            <person name="Lucas S."/>
            <person name="Lapidus A."/>
            <person name="Barry K."/>
            <person name="Detter J.C."/>
            <person name="Glavina del Rio T."/>
            <person name="Hammon N."/>
            <person name="Israni S."/>
            <person name="Dalin E."/>
            <person name="Tice H."/>
            <person name="Pitluck S."/>
            <person name="Di Bartolo G."/>
            <person name="Chain P."/>
            <person name="Malfatti S."/>
            <person name="Shin M."/>
            <person name="Vergez L."/>
            <person name="Schmutz J."/>
            <person name="Larimer F."/>
            <person name="Land M."/>
            <person name="Hauser L."/>
            <person name="Worsham P."/>
            <person name="Chu M."/>
            <person name="Bearden S."/>
            <person name="Garcia E."/>
            <person name="Richardson P."/>
        </authorList>
    </citation>
    <scope>NUCLEOTIDE SEQUENCE [LARGE SCALE GENOMIC DNA]</scope>
    <source>
        <strain>Pestoides F</strain>
    </source>
</reference>
<organism>
    <name type="scientific">Yersinia pestis (strain Pestoides F)</name>
    <dbReference type="NCBI Taxonomy" id="386656"/>
    <lineage>
        <taxon>Bacteria</taxon>
        <taxon>Pseudomonadati</taxon>
        <taxon>Pseudomonadota</taxon>
        <taxon>Gammaproteobacteria</taxon>
        <taxon>Enterobacterales</taxon>
        <taxon>Yersiniaceae</taxon>
        <taxon>Yersinia</taxon>
    </lineage>
</organism>
<sequence length="148" mass="17175">MSQPPFWQQKTLAEMSDSEWESLCDGCGQCCLNKLIDEDTDEIYFTNVACDQLNIKTCQCSNYERRFELEEDCIKLTRENLVTFAWLPPTCAYRLIGEGHDLPRWHPLLTGSKAAMHGERISVRHIAVRESEVVDWQDHILNKPSWAK</sequence>
<comment type="similarity">
    <text evidence="1">Belongs to the UPF0260 family.</text>
</comment>
<dbReference type="EMBL" id="CP000668">
    <property type="protein sequence ID" value="ABP39439.1"/>
    <property type="molecule type" value="Genomic_DNA"/>
</dbReference>
<dbReference type="RefSeq" id="WP_002211739.1">
    <property type="nucleotide sequence ID" value="NZ_CP009715.1"/>
</dbReference>
<dbReference type="KEGG" id="ypp:YPDSF_1039"/>
<dbReference type="PATRIC" id="fig|386656.14.peg.2795"/>
<dbReference type="HAMAP" id="MF_00676">
    <property type="entry name" value="UPF0260"/>
    <property type="match status" value="1"/>
</dbReference>
<dbReference type="InterPro" id="IPR005358">
    <property type="entry name" value="Puta_zinc/iron-chelating_dom"/>
</dbReference>
<dbReference type="InterPro" id="IPR008228">
    <property type="entry name" value="UCP006173"/>
</dbReference>
<dbReference type="NCBIfam" id="NF003498">
    <property type="entry name" value="PRK05170.1-1"/>
    <property type="match status" value="1"/>
</dbReference>
<dbReference type="NCBIfam" id="NF003501">
    <property type="entry name" value="PRK05170.1-5"/>
    <property type="match status" value="1"/>
</dbReference>
<dbReference type="NCBIfam" id="NF003507">
    <property type="entry name" value="PRK05170.2-5"/>
    <property type="match status" value="1"/>
</dbReference>
<dbReference type="PANTHER" id="PTHR37421">
    <property type="entry name" value="UPF0260 PROTEIN YCGN"/>
    <property type="match status" value="1"/>
</dbReference>
<dbReference type="PANTHER" id="PTHR37421:SF1">
    <property type="entry name" value="UPF0260 PROTEIN YCGN"/>
    <property type="match status" value="1"/>
</dbReference>
<dbReference type="Pfam" id="PF03692">
    <property type="entry name" value="CxxCxxCC"/>
    <property type="match status" value="1"/>
</dbReference>
<dbReference type="PIRSF" id="PIRSF006173">
    <property type="entry name" value="UCP006173"/>
    <property type="match status" value="1"/>
</dbReference>
<name>Y1039_YERPP</name>
<feature type="chain" id="PRO_1000044820" description="UPF0260 protein YPDSF_1039">
    <location>
        <begin position="1"/>
        <end position="148"/>
    </location>
</feature>
<accession>A4TJH7</accession>
<proteinExistence type="inferred from homology"/>
<evidence type="ECO:0000255" key="1">
    <source>
        <dbReference type="HAMAP-Rule" id="MF_00676"/>
    </source>
</evidence>
<gene>
    <name type="ordered locus">YPDSF_1039</name>
</gene>
<protein>
    <recommendedName>
        <fullName evidence="1">UPF0260 protein YPDSF_1039</fullName>
    </recommendedName>
</protein>